<organism>
    <name type="scientific">Yersinia pestis</name>
    <dbReference type="NCBI Taxonomy" id="632"/>
    <lineage>
        <taxon>Bacteria</taxon>
        <taxon>Pseudomonadati</taxon>
        <taxon>Pseudomonadota</taxon>
        <taxon>Gammaproteobacteria</taxon>
        <taxon>Enterobacterales</taxon>
        <taxon>Yersiniaceae</taxon>
        <taxon>Yersinia</taxon>
    </lineage>
</organism>
<dbReference type="EMBL" id="AL590842">
    <property type="protein sequence ID" value="CAL19461.1"/>
    <property type="molecule type" value="Genomic_DNA"/>
</dbReference>
<dbReference type="EMBL" id="AE009952">
    <property type="protein sequence ID" value="AAM86725.1"/>
    <property type="molecule type" value="Genomic_DNA"/>
</dbReference>
<dbReference type="EMBL" id="AE017042">
    <property type="protein sequence ID" value="AAS63051.1"/>
    <property type="molecule type" value="Genomic_DNA"/>
</dbReference>
<dbReference type="PIR" id="AC0097">
    <property type="entry name" value="AC0097"/>
</dbReference>
<dbReference type="RefSeq" id="WP_002209838.1">
    <property type="nucleotide sequence ID" value="NZ_WUCM01000007.1"/>
</dbReference>
<dbReference type="RefSeq" id="YP_002345844.1">
    <property type="nucleotide sequence ID" value="NC_003143.1"/>
</dbReference>
<dbReference type="SMR" id="Q8ZHU5"/>
<dbReference type="STRING" id="214092.YPO0789"/>
<dbReference type="PaxDb" id="214092-YPO0789"/>
<dbReference type="DNASU" id="1148122"/>
<dbReference type="EnsemblBacteria" id="AAS63051">
    <property type="protein sequence ID" value="AAS63051"/>
    <property type="gene ID" value="YP_2869"/>
</dbReference>
<dbReference type="GeneID" id="57973847"/>
<dbReference type="KEGG" id="ype:YPO0789"/>
<dbReference type="KEGG" id="ypk:y3175"/>
<dbReference type="KEGG" id="ypm:YP_2869"/>
<dbReference type="PATRIC" id="fig|214092.21.peg.1050"/>
<dbReference type="eggNOG" id="COG3066">
    <property type="taxonomic scope" value="Bacteria"/>
</dbReference>
<dbReference type="HOGENOM" id="CLU_086669_0_0_6"/>
<dbReference type="OMA" id="WEELMDY"/>
<dbReference type="OrthoDB" id="5634909at2"/>
<dbReference type="Proteomes" id="UP000000815">
    <property type="component" value="Chromosome"/>
</dbReference>
<dbReference type="Proteomes" id="UP000001019">
    <property type="component" value="Chromosome"/>
</dbReference>
<dbReference type="Proteomes" id="UP000002490">
    <property type="component" value="Chromosome"/>
</dbReference>
<dbReference type="GO" id="GO:0005737">
    <property type="term" value="C:cytoplasm"/>
    <property type="evidence" value="ECO:0007669"/>
    <property type="project" value="UniProtKB-SubCell"/>
</dbReference>
<dbReference type="GO" id="GO:0003677">
    <property type="term" value="F:DNA binding"/>
    <property type="evidence" value="ECO:0007669"/>
    <property type="project" value="InterPro"/>
</dbReference>
<dbReference type="GO" id="GO:0004519">
    <property type="term" value="F:endonuclease activity"/>
    <property type="evidence" value="ECO:0007669"/>
    <property type="project" value="UniProtKB-UniRule"/>
</dbReference>
<dbReference type="GO" id="GO:0006304">
    <property type="term" value="P:DNA modification"/>
    <property type="evidence" value="ECO:0007669"/>
    <property type="project" value="InterPro"/>
</dbReference>
<dbReference type="GO" id="GO:0006298">
    <property type="term" value="P:mismatch repair"/>
    <property type="evidence" value="ECO:0007669"/>
    <property type="project" value="UniProtKB-UniRule"/>
</dbReference>
<dbReference type="CDD" id="cd00583">
    <property type="entry name" value="MutH-like"/>
    <property type="match status" value="1"/>
</dbReference>
<dbReference type="FunFam" id="3.40.600.10:FF:000001">
    <property type="entry name" value="DNA mismatch repair protein MutH"/>
    <property type="match status" value="1"/>
</dbReference>
<dbReference type="Gene3D" id="3.40.600.10">
    <property type="entry name" value="DNA mismatch repair MutH/Restriction endonuclease, type II"/>
    <property type="match status" value="1"/>
</dbReference>
<dbReference type="HAMAP" id="MF_00759">
    <property type="entry name" value="MutH"/>
    <property type="match status" value="1"/>
</dbReference>
<dbReference type="InterPro" id="IPR004230">
    <property type="entry name" value="DNA_mismatch_repair_MutH"/>
</dbReference>
<dbReference type="InterPro" id="IPR011337">
    <property type="entry name" value="DNA_rep_MutH/RE_typeII_Sau3AI"/>
</dbReference>
<dbReference type="InterPro" id="IPR037057">
    <property type="entry name" value="DNA_rep_MutH/T2_RE_sf"/>
</dbReference>
<dbReference type="InterPro" id="IPR011335">
    <property type="entry name" value="Restrct_endonuc-II-like"/>
</dbReference>
<dbReference type="NCBIfam" id="TIGR02248">
    <property type="entry name" value="mutH_TIGR"/>
    <property type="match status" value="1"/>
</dbReference>
<dbReference type="NCBIfam" id="NF003458">
    <property type="entry name" value="PRK05070.1"/>
    <property type="match status" value="1"/>
</dbReference>
<dbReference type="Pfam" id="PF02976">
    <property type="entry name" value="MutH"/>
    <property type="match status" value="1"/>
</dbReference>
<dbReference type="SMART" id="SM00927">
    <property type="entry name" value="MutH"/>
    <property type="match status" value="1"/>
</dbReference>
<dbReference type="SUPFAM" id="SSF52980">
    <property type="entry name" value="Restriction endonuclease-like"/>
    <property type="match status" value="1"/>
</dbReference>
<name>MUTH_YERPE</name>
<reference key="1">
    <citation type="journal article" date="2001" name="Nature">
        <title>Genome sequence of Yersinia pestis, the causative agent of plague.</title>
        <authorList>
            <person name="Parkhill J."/>
            <person name="Wren B.W."/>
            <person name="Thomson N.R."/>
            <person name="Titball R.W."/>
            <person name="Holden M.T.G."/>
            <person name="Prentice M.B."/>
            <person name="Sebaihia M."/>
            <person name="James K.D."/>
            <person name="Churcher C.M."/>
            <person name="Mungall K.L."/>
            <person name="Baker S."/>
            <person name="Basham D."/>
            <person name="Bentley S.D."/>
            <person name="Brooks K."/>
            <person name="Cerdeno-Tarraga A.-M."/>
            <person name="Chillingworth T."/>
            <person name="Cronin A."/>
            <person name="Davies R.M."/>
            <person name="Davis P."/>
            <person name="Dougan G."/>
            <person name="Feltwell T."/>
            <person name="Hamlin N."/>
            <person name="Holroyd S."/>
            <person name="Jagels K."/>
            <person name="Karlyshev A.V."/>
            <person name="Leather S."/>
            <person name="Moule S."/>
            <person name="Oyston P.C.F."/>
            <person name="Quail M.A."/>
            <person name="Rutherford K.M."/>
            <person name="Simmonds M."/>
            <person name="Skelton J."/>
            <person name="Stevens K."/>
            <person name="Whitehead S."/>
            <person name="Barrell B.G."/>
        </authorList>
    </citation>
    <scope>NUCLEOTIDE SEQUENCE [LARGE SCALE GENOMIC DNA]</scope>
    <source>
        <strain>CO-92 / Biovar Orientalis</strain>
    </source>
</reference>
<reference key="2">
    <citation type="journal article" date="2002" name="J. Bacteriol.">
        <title>Genome sequence of Yersinia pestis KIM.</title>
        <authorList>
            <person name="Deng W."/>
            <person name="Burland V."/>
            <person name="Plunkett G. III"/>
            <person name="Boutin A."/>
            <person name="Mayhew G.F."/>
            <person name="Liss P."/>
            <person name="Perna N.T."/>
            <person name="Rose D.J."/>
            <person name="Mau B."/>
            <person name="Zhou S."/>
            <person name="Schwartz D.C."/>
            <person name="Fetherston J.D."/>
            <person name="Lindler L.E."/>
            <person name="Brubaker R.R."/>
            <person name="Plano G.V."/>
            <person name="Straley S.C."/>
            <person name="McDonough K.A."/>
            <person name="Nilles M.L."/>
            <person name="Matson J.S."/>
            <person name="Blattner F.R."/>
            <person name="Perry R.D."/>
        </authorList>
    </citation>
    <scope>NUCLEOTIDE SEQUENCE [LARGE SCALE GENOMIC DNA]</scope>
    <source>
        <strain>KIM10+ / Biovar Mediaevalis</strain>
    </source>
</reference>
<reference key="3">
    <citation type="journal article" date="2004" name="DNA Res.">
        <title>Complete genome sequence of Yersinia pestis strain 91001, an isolate avirulent to humans.</title>
        <authorList>
            <person name="Song Y."/>
            <person name="Tong Z."/>
            <person name="Wang J."/>
            <person name="Wang L."/>
            <person name="Guo Z."/>
            <person name="Han Y."/>
            <person name="Zhang J."/>
            <person name="Pei D."/>
            <person name="Zhou D."/>
            <person name="Qin H."/>
            <person name="Pang X."/>
            <person name="Han Y."/>
            <person name="Zhai J."/>
            <person name="Li M."/>
            <person name="Cui B."/>
            <person name="Qi Z."/>
            <person name="Jin L."/>
            <person name="Dai R."/>
            <person name="Chen F."/>
            <person name="Li S."/>
            <person name="Ye C."/>
            <person name="Du Z."/>
            <person name="Lin W."/>
            <person name="Wang J."/>
            <person name="Yu J."/>
            <person name="Yang H."/>
            <person name="Wang J."/>
            <person name="Huang P."/>
            <person name="Yang R."/>
        </authorList>
    </citation>
    <scope>NUCLEOTIDE SEQUENCE [LARGE SCALE GENOMIC DNA]</scope>
    <source>
        <strain>91001 / Biovar Mediaevalis</strain>
    </source>
</reference>
<gene>
    <name evidence="1" type="primary">mutH</name>
    <name type="ordered locus">YPO0789</name>
    <name type="ordered locus">y3175</name>
    <name type="ordered locus">YP_2869</name>
</gene>
<evidence type="ECO:0000255" key="1">
    <source>
        <dbReference type="HAMAP-Rule" id="MF_00759"/>
    </source>
</evidence>
<feature type="chain" id="PRO_0000198680" description="DNA mismatch repair protein MutH">
    <location>
        <begin position="1"/>
        <end position="228"/>
    </location>
</feature>
<sequence>MSVYSLPPAPPSDEHQLFQRAQALSGFTLGELATRAQWVIPADLKRVKGWVGMLLEFYLGASAGSKPEQDFADIGIELKTIPISAQGKPLETTFVCVAPLTGNSGVTWESSHVRHKLARVLWVPVEGERHIPLAERRVGAPLLWSPNVEEEELLRRDWEELMDLIVLGKVESITARHGQVLQLRPKAANSRALTEAIGEFGQPIMTLPRGFYLKKTLTAPMLARHFLL</sequence>
<keyword id="KW-0963">Cytoplasm</keyword>
<keyword id="KW-0227">DNA damage</keyword>
<keyword id="KW-0234">DNA repair</keyword>
<keyword id="KW-0255">Endonuclease</keyword>
<keyword id="KW-0378">Hydrolase</keyword>
<keyword id="KW-0540">Nuclease</keyword>
<keyword id="KW-1185">Reference proteome</keyword>
<comment type="function">
    <text evidence="1">Sequence-specific endonuclease that cleaves unmethylated GATC sequences. It is involved in DNA mismatch repair.</text>
</comment>
<comment type="subcellular location">
    <subcellularLocation>
        <location evidence="1">Cytoplasm</location>
    </subcellularLocation>
</comment>
<comment type="similarity">
    <text evidence="1">Belongs to the MutH family.</text>
</comment>
<accession>Q8ZHU5</accession>
<accession>Q0WIP4</accession>
<protein>
    <recommendedName>
        <fullName evidence="1">DNA mismatch repair protein MutH</fullName>
    </recommendedName>
    <alternativeName>
        <fullName evidence="1">Methyl-directed mismatch repair protein</fullName>
    </alternativeName>
</protein>
<proteinExistence type="inferred from homology"/>